<organismHost>
    <name type="scientific">Tupaia</name>
    <dbReference type="NCBI Taxonomy" id="9394"/>
</organismHost>
<protein>
    <recommendedName>
        <fullName>Capsid protein</fullName>
    </recommendedName>
</protein>
<organism>
    <name type="scientific">Torque teno tupaia virus (isolate Tbc-TTV14)</name>
    <dbReference type="NCBI Taxonomy" id="766185"/>
    <lineage>
        <taxon>Viruses</taxon>
        <taxon>Viruses incertae sedis</taxon>
        <taxon>Anelloviridae</taxon>
        <taxon>Deltatorquevirus</taxon>
        <taxon>Deltatorquevirus tupai1</taxon>
    </lineage>
</organism>
<name>CAPSD_TTVD1</name>
<evidence type="ECO:0000250" key="1"/>
<evidence type="ECO:0000256" key="2">
    <source>
        <dbReference type="SAM" id="MobiDB-lite"/>
    </source>
</evidence>
<evidence type="ECO:0000305" key="3"/>
<dbReference type="EMBL" id="AB057358">
    <property type="protein sequence ID" value="BAB63953.1"/>
    <property type="molecule type" value="Genomic_DNA"/>
</dbReference>
<dbReference type="Proteomes" id="UP000006636">
    <property type="component" value="Segment"/>
</dbReference>
<dbReference type="GO" id="GO:0039615">
    <property type="term" value="C:T=1 icosahedral viral capsid"/>
    <property type="evidence" value="ECO:0007669"/>
    <property type="project" value="UniProtKB-KW"/>
</dbReference>
<dbReference type="InterPro" id="IPR004219">
    <property type="entry name" value="TTvirus_Unk"/>
</dbReference>
<dbReference type="Pfam" id="PF02956">
    <property type="entry name" value="TT_ORF1"/>
    <property type="match status" value="1"/>
</dbReference>
<accession>Q91PQ1</accession>
<gene>
    <name type="ORF">ORF1</name>
</gene>
<sequence length="502" mass="58831">MAYFRRNFYGGRRHYYRRRNAYTRRRYRRVRRRHRGRRFPYFKQGKRRRTRLLHVTDPRYKAHCTITGWVPIAMTRIQLISQPFTVDTLSPFHVYPGGYGYGVFTLEAMYKEHLMKRNRWSRSNAGFDLGRYLGTWLTLVPHPYFSYLFYYDPEYGNTFEFKKLIHPAIMITHPKTILVLSNKRGGNRRKWPRMWIPRPAIFADGWEFQKDLCQHGLFAFGWAWVDLDRPWMADISKPAQTIDPSTYDKKNDMINKVPNMWWKEAANDWLTEWGRPQGSGVTQQFNQLAMAGPFVLKTNKSEYVNTELLQIILFYKSHFQWGGEFLQDKVLADPTKIPPAQTAYYQQAGQTNLYGSPYKPLSSGLHDSISELPIASPPQNPHKYTVRPSDYDKDGILTEESFRRLTDSPYTSDGGHSFSSFSTASDPLEGTSRYARPLGRKTTREPSRRRKRRRRSPSPEDEETAPIPPKSNSEPSISGPGRATRKQLLQRLFRRLLTSSPQ</sequence>
<proteinExistence type="inferred from homology"/>
<reference key="1">
    <citation type="journal article" date="2001" name="J. Gen. Virol.">
        <title>Genomic and evolutionary characterization of TT virus (TTV) in tupaias and comparison with species-specific TTVs in humans and non-human primates.</title>
        <authorList>
            <person name="Okamoto H."/>
            <person name="Nishizawa T."/>
            <person name="Takahashi M."/>
            <person name="Tawara A."/>
            <person name="Peng Y."/>
            <person name="Kishimoto J."/>
            <person name="Wang Y."/>
        </authorList>
    </citation>
    <scope>NUCLEOTIDE SEQUENCE [GENOMIC DNA]</scope>
</reference>
<comment type="function">
    <text evidence="1">Self-assembles to form an icosahedral capsid with a T=1 symmetry, about 30 nm in diameter, and consisting of 60 capsid proteins. The capsid encapsulates the genomic DNA. Capsid protein is involved in attachment and entry into the host cell (By similarity).</text>
</comment>
<comment type="subcellular location">
    <subcellularLocation>
        <location evidence="3">Virion</location>
    </subcellularLocation>
</comment>
<comment type="similarity">
    <text evidence="3">Belongs to the anelloviridae capsid protein family.</text>
</comment>
<feature type="chain" id="PRO_0000404272" description="Capsid protein">
    <location>
        <begin position="1"/>
        <end position="502"/>
    </location>
</feature>
<feature type="region of interest" description="Disordered" evidence="2">
    <location>
        <begin position="369"/>
        <end position="392"/>
    </location>
</feature>
<feature type="region of interest" description="Disordered" evidence="2">
    <location>
        <begin position="405"/>
        <end position="487"/>
    </location>
</feature>
<feature type="compositionally biased region" description="Basic residues" evidence="2">
    <location>
        <begin position="447"/>
        <end position="456"/>
    </location>
</feature>
<keyword id="KW-0167">Capsid protein</keyword>
<keyword id="KW-1185">Reference proteome</keyword>
<keyword id="KW-1140">T=1 icosahedral capsid protein</keyword>
<keyword id="KW-0946">Virion</keyword>